<keyword id="KW-0150">Chloroplast</keyword>
<keyword id="KW-0934">Plastid</keyword>
<keyword id="KW-0687">Ribonucleoprotein</keyword>
<keyword id="KW-0689">Ribosomal protein</keyword>
<keyword id="KW-0694">RNA-binding</keyword>
<keyword id="KW-0699">rRNA-binding</keyword>
<reference key="1">
    <citation type="journal article" date="1997" name="Plant Syst. Evol.">
        <title>Phylogenetic analysis of Iridaceae with parsimony and distance methods using the plastid gene rps4.</title>
        <authorList>
            <person name="Souza-Chies T.T."/>
            <person name="Bittar G."/>
            <person name="Nadot S."/>
            <person name="Carter L."/>
            <person name="Besin E."/>
            <person name="Lejeune B.P."/>
        </authorList>
    </citation>
    <scope>NUCLEOTIDE SEQUENCE [GENOMIC DNA]</scope>
</reference>
<feature type="chain" id="PRO_0000132683" description="Small ribosomal subunit protein uS4c">
    <location>
        <begin position="1"/>
        <end position="196" status="greater than"/>
    </location>
</feature>
<feature type="domain" description="S4 RNA-binding">
    <location>
        <begin position="89"/>
        <end position="150"/>
    </location>
</feature>
<feature type="region of interest" description="Disordered" evidence="2">
    <location>
        <begin position="15"/>
        <end position="36"/>
    </location>
</feature>
<feature type="non-terminal residue">
    <location>
        <position position="196"/>
    </location>
</feature>
<comment type="function">
    <text evidence="1">One of the primary rRNA binding proteins, it binds directly to 16S rRNA where it nucleates assembly of the body of the 30S subunit.</text>
</comment>
<comment type="function">
    <text evidence="1">With S5 and S12 plays an important role in translational accuracy.</text>
</comment>
<comment type="subunit">
    <text evidence="1">Part of the 30S ribosomal subunit. Contacts protein S5. The interaction surface between S4 and S5 is involved in control of translational fidelity (By similarity).</text>
</comment>
<comment type="subcellular location">
    <subcellularLocation>
        <location>Plastid</location>
        <location>Chloroplast</location>
    </subcellularLocation>
</comment>
<comment type="similarity">
    <text evidence="3">Belongs to the universal ribosomal protein uS4 family.</text>
</comment>
<geneLocation type="chloroplast"/>
<name>RR4_YUCFI</name>
<organism>
    <name type="scientific">Yucca filamentosa</name>
    <name type="common">Bear-grass</name>
    <name type="synonym">Adam's-needle</name>
    <dbReference type="NCBI Taxonomy" id="55960"/>
    <lineage>
        <taxon>Eukaryota</taxon>
        <taxon>Viridiplantae</taxon>
        <taxon>Streptophyta</taxon>
        <taxon>Embryophyta</taxon>
        <taxon>Tracheophyta</taxon>
        <taxon>Spermatophyta</taxon>
        <taxon>Magnoliopsida</taxon>
        <taxon>Liliopsida</taxon>
        <taxon>Asparagales</taxon>
        <taxon>Asparagaceae</taxon>
        <taxon>Agavoideae</taxon>
        <taxon>Yucca</taxon>
    </lineage>
</organism>
<evidence type="ECO:0000250" key="1"/>
<evidence type="ECO:0000256" key="2">
    <source>
        <dbReference type="SAM" id="MobiDB-lite"/>
    </source>
</evidence>
<evidence type="ECO:0000305" key="3"/>
<gene>
    <name type="primary">rps4</name>
</gene>
<protein>
    <recommendedName>
        <fullName evidence="3">Small ribosomal subunit protein uS4c</fullName>
    </recommendedName>
    <alternativeName>
        <fullName>30S ribosomal protein S4, chloroplastic</fullName>
    </alternativeName>
</protein>
<sequence length="196" mass="22766">MSRYRGPRFKKIRRLGTLPGLTSKRPRSGSDLKNPLRSVKRSQYRIRLEEKQKLRFHYGLTERQLLRYVHIAGKAKGSTGQVLLQLLEMRLDNILFRLGMASTIPGARQLVNHRHILVNGRIVDIPSYRCKPRDIITTKDKQRSKALIQNYIASSPHEELPNHLTIDSFQYKGLVNQIIDSKWIGLKINELLVVEY</sequence>
<accession>P69679</accession>
<accession>O47025</accession>
<accession>O47034</accession>
<proteinExistence type="inferred from homology"/>
<dbReference type="EMBL" id="X84148">
    <property type="protein sequence ID" value="CAA58955.1"/>
    <property type="molecule type" value="Genomic_DNA"/>
</dbReference>
<dbReference type="SMR" id="P69679"/>
<dbReference type="GO" id="GO:0009507">
    <property type="term" value="C:chloroplast"/>
    <property type="evidence" value="ECO:0007669"/>
    <property type="project" value="UniProtKB-SubCell"/>
</dbReference>
<dbReference type="GO" id="GO:0015935">
    <property type="term" value="C:small ribosomal subunit"/>
    <property type="evidence" value="ECO:0007669"/>
    <property type="project" value="InterPro"/>
</dbReference>
<dbReference type="GO" id="GO:0019843">
    <property type="term" value="F:rRNA binding"/>
    <property type="evidence" value="ECO:0007669"/>
    <property type="project" value="UniProtKB-KW"/>
</dbReference>
<dbReference type="GO" id="GO:0003735">
    <property type="term" value="F:structural constituent of ribosome"/>
    <property type="evidence" value="ECO:0007669"/>
    <property type="project" value="InterPro"/>
</dbReference>
<dbReference type="GO" id="GO:0042274">
    <property type="term" value="P:ribosomal small subunit biogenesis"/>
    <property type="evidence" value="ECO:0007669"/>
    <property type="project" value="TreeGrafter"/>
</dbReference>
<dbReference type="GO" id="GO:0006412">
    <property type="term" value="P:translation"/>
    <property type="evidence" value="ECO:0007669"/>
    <property type="project" value="InterPro"/>
</dbReference>
<dbReference type="CDD" id="cd00165">
    <property type="entry name" value="S4"/>
    <property type="match status" value="1"/>
</dbReference>
<dbReference type="FunFam" id="1.10.1050.10:FF:000002">
    <property type="entry name" value="30S ribosomal protein S4, chloroplastic"/>
    <property type="match status" value="1"/>
</dbReference>
<dbReference type="FunFam" id="3.10.290.10:FF:000081">
    <property type="entry name" value="30S ribosomal protein S4, chloroplastic"/>
    <property type="match status" value="1"/>
</dbReference>
<dbReference type="Gene3D" id="1.10.1050.10">
    <property type="entry name" value="Ribosomal Protein S4 Delta 41, Chain A, domain 1"/>
    <property type="match status" value="1"/>
</dbReference>
<dbReference type="Gene3D" id="3.10.290.10">
    <property type="entry name" value="RNA-binding S4 domain"/>
    <property type="match status" value="1"/>
</dbReference>
<dbReference type="HAMAP" id="MF_01306_B">
    <property type="entry name" value="Ribosomal_uS4_B"/>
    <property type="match status" value="1"/>
</dbReference>
<dbReference type="InterPro" id="IPR022801">
    <property type="entry name" value="Ribosomal_uS4"/>
</dbReference>
<dbReference type="InterPro" id="IPR005709">
    <property type="entry name" value="Ribosomal_uS4_bac-type"/>
</dbReference>
<dbReference type="InterPro" id="IPR018079">
    <property type="entry name" value="Ribosomal_uS4_CS"/>
</dbReference>
<dbReference type="InterPro" id="IPR001912">
    <property type="entry name" value="Ribosomal_uS4_N"/>
</dbReference>
<dbReference type="InterPro" id="IPR002942">
    <property type="entry name" value="S4_RNA-bd"/>
</dbReference>
<dbReference type="InterPro" id="IPR036986">
    <property type="entry name" value="S4_RNA-bd_sf"/>
</dbReference>
<dbReference type="NCBIfam" id="NF003717">
    <property type="entry name" value="PRK05327.1"/>
    <property type="match status" value="1"/>
</dbReference>
<dbReference type="NCBIfam" id="TIGR01017">
    <property type="entry name" value="rpsD_bact"/>
    <property type="match status" value="1"/>
</dbReference>
<dbReference type="PANTHER" id="PTHR11831">
    <property type="entry name" value="30S 40S RIBOSOMAL PROTEIN"/>
    <property type="match status" value="1"/>
</dbReference>
<dbReference type="PANTHER" id="PTHR11831:SF4">
    <property type="entry name" value="SMALL RIBOSOMAL SUBUNIT PROTEIN US4M"/>
    <property type="match status" value="1"/>
</dbReference>
<dbReference type="Pfam" id="PF00163">
    <property type="entry name" value="Ribosomal_S4"/>
    <property type="match status" value="1"/>
</dbReference>
<dbReference type="Pfam" id="PF01479">
    <property type="entry name" value="S4"/>
    <property type="match status" value="1"/>
</dbReference>
<dbReference type="SMART" id="SM01390">
    <property type="entry name" value="Ribosomal_S4"/>
    <property type="match status" value="1"/>
</dbReference>
<dbReference type="SMART" id="SM00363">
    <property type="entry name" value="S4"/>
    <property type="match status" value="1"/>
</dbReference>
<dbReference type="SUPFAM" id="SSF55174">
    <property type="entry name" value="Alpha-L RNA-binding motif"/>
    <property type="match status" value="1"/>
</dbReference>
<dbReference type="PROSITE" id="PS00632">
    <property type="entry name" value="RIBOSOMAL_S4"/>
    <property type="match status" value="1"/>
</dbReference>
<dbReference type="PROSITE" id="PS50889">
    <property type="entry name" value="S4"/>
    <property type="match status" value="1"/>
</dbReference>